<organism>
    <name type="scientific">Brachybacterium faecium (strain ATCC 43885 / DSM 4810 / JCM 11609 / LMG 19847 / NBRC 14762 / NCIMB 9860 / 6-10)</name>
    <dbReference type="NCBI Taxonomy" id="446465"/>
    <lineage>
        <taxon>Bacteria</taxon>
        <taxon>Bacillati</taxon>
        <taxon>Actinomycetota</taxon>
        <taxon>Actinomycetes</taxon>
        <taxon>Micrococcales</taxon>
        <taxon>Dermabacteraceae</taxon>
        <taxon>Brachybacterium</taxon>
    </lineage>
</organism>
<sequence>MADSAKTPRGKKRRPFTGLALWIIVALLLGMAMFSLFGRDGYQQIDTQQGLELLAGDTVEQAKIIDGNQQRVDLVLTEDFKDGDEDKGTQVRFSYVDARGDAVVQAVEDAAPAKGYTDEIASSSWWSTLLLSFLPLLIFIGLFWFLIMNAQGGGKAMQFGKSKAKLFNKEAPKVTFADVAGADEAVEELDEIKQFLVDPGRYQAVGAKIPKGVLLYGPPGTGKTLLAKAVAGEANVPFYSISGSDFVEMFVGVGASRVRDLFNTAKENAPAIIFIDEIDAVGRHRGAGMGGGHDEREQTLNQMLVEMDGFEENQNVILIAATNRVDILDPALLRPGRFDRQIGVEAPDLKGRLHILGVHAKGKPLAHDVDLEAVAKRAIGMSGADLANVLNEAALLTARSGNQIIDNRALDEAIDRVSMGPQRYSKVMTERERQMTAYHEGGHALVAAAMNNSAPVTKVTILPRGRAGGYTMVVPTQDRNYQSRNELLDRLAYAMGGYAVEESIFHDVTTGPSSDLQNATKIARTMVMQLGMSGTVGQVALSGEQDEVFVGMQQGQAPRFSAETASLVDQEVRTLLDNALDEAWSVIVENRHVLDRLVEELLEKETLNERELAQIFRDVKKQPPREVWISSTERPSLAAPSVGGTTTATGTESHDAGEPLQPNPPELPHPGGEGPQIPGAPHGGEPGGGGYGYDGSAGTDGTGR</sequence>
<gene>
    <name evidence="1" type="primary">ftsH</name>
    <name type="ordered locus">Bfae_12800</name>
</gene>
<feature type="chain" id="PRO_0000400332" description="ATP-dependent zinc metalloprotease FtsH">
    <location>
        <begin position="1"/>
        <end position="704"/>
    </location>
</feature>
<feature type="topological domain" description="Cytoplasmic" evidence="1">
    <location>
        <begin position="1"/>
        <end position="17"/>
    </location>
</feature>
<feature type="transmembrane region" description="Helical" evidence="1">
    <location>
        <begin position="18"/>
        <end position="38"/>
    </location>
</feature>
<feature type="topological domain" description="Extracellular" evidence="1">
    <location>
        <begin position="39"/>
        <end position="127"/>
    </location>
</feature>
<feature type="transmembrane region" description="Helical" evidence="1">
    <location>
        <begin position="128"/>
        <end position="148"/>
    </location>
</feature>
<feature type="topological domain" description="Cytoplasmic" evidence="1">
    <location>
        <begin position="149"/>
        <end position="704"/>
    </location>
</feature>
<feature type="region of interest" description="Disordered" evidence="2">
    <location>
        <begin position="624"/>
        <end position="704"/>
    </location>
</feature>
<feature type="compositionally biased region" description="Gly residues" evidence="2">
    <location>
        <begin position="681"/>
        <end position="704"/>
    </location>
</feature>
<feature type="active site" evidence="1">
    <location>
        <position position="440"/>
    </location>
</feature>
<feature type="binding site" evidence="1">
    <location>
        <begin position="217"/>
        <end position="224"/>
    </location>
    <ligand>
        <name>ATP</name>
        <dbReference type="ChEBI" id="CHEBI:30616"/>
    </ligand>
</feature>
<feature type="binding site" evidence="1">
    <location>
        <position position="439"/>
    </location>
    <ligand>
        <name>Zn(2+)</name>
        <dbReference type="ChEBI" id="CHEBI:29105"/>
        <note>catalytic</note>
    </ligand>
</feature>
<feature type="binding site" evidence="1">
    <location>
        <position position="443"/>
    </location>
    <ligand>
        <name>Zn(2+)</name>
        <dbReference type="ChEBI" id="CHEBI:29105"/>
        <note>catalytic</note>
    </ligand>
</feature>
<feature type="binding site" evidence="1">
    <location>
        <position position="515"/>
    </location>
    <ligand>
        <name>Zn(2+)</name>
        <dbReference type="ChEBI" id="CHEBI:29105"/>
        <note>catalytic</note>
    </ligand>
</feature>
<reference key="1">
    <citation type="journal article" date="2009" name="Stand. Genomic Sci.">
        <title>Complete genome sequence of Brachybacterium faecium type strain (Schefferle 6-10).</title>
        <authorList>
            <person name="Lapidus A."/>
            <person name="Pukall R."/>
            <person name="Labuttii K."/>
            <person name="Copeland A."/>
            <person name="Del Rio T.G."/>
            <person name="Nolan M."/>
            <person name="Chen F."/>
            <person name="Lucas S."/>
            <person name="Tice H."/>
            <person name="Cheng J.F."/>
            <person name="Bruce D."/>
            <person name="Goodwin L."/>
            <person name="Pitluck S."/>
            <person name="Rohde M."/>
            <person name="Goker M."/>
            <person name="Pati A."/>
            <person name="Ivanova N."/>
            <person name="Mavrommatis K."/>
            <person name="Chen A."/>
            <person name="Palaniappan K."/>
            <person name="D'haeseleer P."/>
            <person name="Chain P."/>
            <person name="Bristow J."/>
            <person name="Eisen J.A."/>
            <person name="Markowitz V."/>
            <person name="Hugenholtz P."/>
            <person name="Kyrpides N.C."/>
            <person name="Klenk H.P."/>
        </authorList>
    </citation>
    <scope>NUCLEOTIDE SEQUENCE [LARGE SCALE GENOMIC DNA]</scope>
    <source>
        <strain>ATCC 43885 / DSM 4810 / JCM 11609 / LMG 19847 / NBRC 14762 / NCIMB 9860 / 6-10</strain>
    </source>
</reference>
<dbReference type="EC" id="3.4.24.-" evidence="1"/>
<dbReference type="EMBL" id="CP001643">
    <property type="protein sequence ID" value="ACU85123.1"/>
    <property type="molecule type" value="Genomic_DNA"/>
</dbReference>
<dbReference type="RefSeq" id="YP_003154713.1">
    <property type="nucleotide sequence ID" value="NC_013172.1"/>
</dbReference>
<dbReference type="SMR" id="C7MC16"/>
<dbReference type="STRING" id="446465.Bfae_12800"/>
<dbReference type="KEGG" id="bfa:Bfae_12800"/>
<dbReference type="PATRIC" id="fig|446465.5.peg.1280"/>
<dbReference type="eggNOG" id="COG0465">
    <property type="taxonomic scope" value="Bacteria"/>
</dbReference>
<dbReference type="HOGENOM" id="CLU_000688_16_1_11"/>
<dbReference type="OrthoDB" id="9809379at2"/>
<dbReference type="Proteomes" id="UP000001919">
    <property type="component" value="Chromosome"/>
</dbReference>
<dbReference type="GO" id="GO:0005886">
    <property type="term" value="C:plasma membrane"/>
    <property type="evidence" value="ECO:0007669"/>
    <property type="project" value="UniProtKB-SubCell"/>
</dbReference>
<dbReference type="GO" id="GO:0005524">
    <property type="term" value="F:ATP binding"/>
    <property type="evidence" value="ECO:0007669"/>
    <property type="project" value="UniProtKB-UniRule"/>
</dbReference>
<dbReference type="GO" id="GO:0016887">
    <property type="term" value="F:ATP hydrolysis activity"/>
    <property type="evidence" value="ECO:0007669"/>
    <property type="project" value="UniProtKB-UniRule"/>
</dbReference>
<dbReference type="GO" id="GO:0004176">
    <property type="term" value="F:ATP-dependent peptidase activity"/>
    <property type="evidence" value="ECO:0007669"/>
    <property type="project" value="InterPro"/>
</dbReference>
<dbReference type="GO" id="GO:0004222">
    <property type="term" value="F:metalloendopeptidase activity"/>
    <property type="evidence" value="ECO:0007669"/>
    <property type="project" value="InterPro"/>
</dbReference>
<dbReference type="GO" id="GO:0008270">
    <property type="term" value="F:zinc ion binding"/>
    <property type="evidence" value="ECO:0007669"/>
    <property type="project" value="UniProtKB-UniRule"/>
</dbReference>
<dbReference type="GO" id="GO:0030163">
    <property type="term" value="P:protein catabolic process"/>
    <property type="evidence" value="ECO:0007669"/>
    <property type="project" value="UniProtKB-UniRule"/>
</dbReference>
<dbReference type="GO" id="GO:0006508">
    <property type="term" value="P:proteolysis"/>
    <property type="evidence" value="ECO:0007669"/>
    <property type="project" value="UniProtKB-KW"/>
</dbReference>
<dbReference type="CDD" id="cd19501">
    <property type="entry name" value="RecA-like_FtsH"/>
    <property type="match status" value="1"/>
</dbReference>
<dbReference type="FunFam" id="1.10.8.60:FF:000001">
    <property type="entry name" value="ATP-dependent zinc metalloprotease FtsH"/>
    <property type="match status" value="1"/>
</dbReference>
<dbReference type="FunFam" id="1.20.58.760:FF:000001">
    <property type="entry name" value="ATP-dependent zinc metalloprotease FtsH"/>
    <property type="match status" value="1"/>
</dbReference>
<dbReference type="FunFam" id="3.40.50.300:FF:000001">
    <property type="entry name" value="ATP-dependent zinc metalloprotease FtsH"/>
    <property type="match status" value="1"/>
</dbReference>
<dbReference type="Gene3D" id="1.10.8.60">
    <property type="match status" value="1"/>
</dbReference>
<dbReference type="Gene3D" id="3.40.50.300">
    <property type="entry name" value="P-loop containing nucleotide triphosphate hydrolases"/>
    <property type="match status" value="1"/>
</dbReference>
<dbReference type="Gene3D" id="1.20.58.760">
    <property type="entry name" value="Peptidase M41"/>
    <property type="match status" value="1"/>
</dbReference>
<dbReference type="HAMAP" id="MF_01458">
    <property type="entry name" value="FtsH"/>
    <property type="match status" value="1"/>
</dbReference>
<dbReference type="InterPro" id="IPR003593">
    <property type="entry name" value="AAA+_ATPase"/>
</dbReference>
<dbReference type="InterPro" id="IPR041569">
    <property type="entry name" value="AAA_lid_3"/>
</dbReference>
<dbReference type="InterPro" id="IPR003959">
    <property type="entry name" value="ATPase_AAA_core"/>
</dbReference>
<dbReference type="InterPro" id="IPR003960">
    <property type="entry name" value="ATPase_AAA_CS"/>
</dbReference>
<dbReference type="InterPro" id="IPR005936">
    <property type="entry name" value="FtsH"/>
</dbReference>
<dbReference type="InterPro" id="IPR027417">
    <property type="entry name" value="P-loop_NTPase"/>
</dbReference>
<dbReference type="InterPro" id="IPR011546">
    <property type="entry name" value="Pept_M41_FtsH_extracell"/>
</dbReference>
<dbReference type="InterPro" id="IPR000642">
    <property type="entry name" value="Peptidase_M41"/>
</dbReference>
<dbReference type="InterPro" id="IPR037219">
    <property type="entry name" value="Peptidase_M41-like"/>
</dbReference>
<dbReference type="NCBIfam" id="TIGR01241">
    <property type="entry name" value="FtsH_fam"/>
    <property type="match status" value="1"/>
</dbReference>
<dbReference type="PANTHER" id="PTHR23076:SF97">
    <property type="entry name" value="ATP-DEPENDENT ZINC METALLOPROTEASE YME1L1"/>
    <property type="match status" value="1"/>
</dbReference>
<dbReference type="PANTHER" id="PTHR23076">
    <property type="entry name" value="METALLOPROTEASE M41 FTSH"/>
    <property type="match status" value="1"/>
</dbReference>
<dbReference type="Pfam" id="PF00004">
    <property type="entry name" value="AAA"/>
    <property type="match status" value="1"/>
</dbReference>
<dbReference type="Pfam" id="PF17862">
    <property type="entry name" value="AAA_lid_3"/>
    <property type="match status" value="1"/>
</dbReference>
<dbReference type="Pfam" id="PF06480">
    <property type="entry name" value="FtsH_ext"/>
    <property type="match status" value="1"/>
</dbReference>
<dbReference type="Pfam" id="PF01434">
    <property type="entry name" value="Peptidase_M41"/>
    <property type="match status" value="1"/>
</dbReference>
<dbReference type="SMART" id="SM00382">
    <property type="entry name" value="AAA"/>
    <property type="match status" value="1"/>
</dbReference>
<dbReference type="SUPFAM" id="SSF140990">
    <property type="entry name" value="FtsH protease domain-like"/>
    <property type="match status" value="1"/>
</dbReference>
<dbReference type="SUPFAM" id="SSF52540">
    <property type="entry name" value="P-loop containing nucleoside triphosphate hydrolases"/>
    <property type="match status" value="1"/>
</dbReference>
<dbReference type="PROSITE" id="PS00674">
    <property type="entry name" value="AAA"/>
    <property type="match status" value="1"/>
</dbReference>
<accession>C7MC16</accession>
<proteinExistence type="inferred from homology"/>
<comment type="function">
    <text evidence="1">Acts as a processive, ATP-dependent zinc metallopeptidase for both cytoplasmic and membrane proteins. Plays a role in the quality control of integral membrane proteins.</text>
</comment>
<comment type="cofactor">
    <cofactor evidence="1">
        <name>Zn(2+)</name>
        <dbReference type="ChEBI" id="CHEBI:29105"/>
    </cofactor>
    <text evidence="1">Binds 1 zinc ion per subunit.</text>
</comment>
<comment type="subunit">
    <text evidence="1">Homohexamer.</text>
</comment>
<comment type="subcellular location">
    <subcellularLocation>
        <location evidence="1">Cell membrane</location>
        <topology evidence="1">Multi-pass membrane protein</topology>
        <orientation evidence="1">Cytoplasmic side</orientation>
    </subcellularLocation>
</comment>
<comment type="similarity">
    <text evidence="1">In the central section; belongs to the AAA ATPase family.</text>
</comment>
<comment type="similarity">
    <text evidence="1">In the C-terminal section; belongs to the peptidase M41 family.</text>
</comment>
<name>FTSH_BRAFD</name>
<evidence type="ECO:0000255" key="1">
    <source>
        <dbReference type="HAMAP-Rule" id="MF_01458"/>
    </source>
</evidence>
<evidence type="ECO:0000256" key="2">
    <source>
        <dbReference type="SAM" id="MobiDB-lite"/>
    </source>
</evidence>
<keyword id="KW-0067">ATP-binding</keyword>
<keyword id="KW-1003">Cell membrane</keyword>
<keyword id="KW-0378">Hydrolase</keyword>
<keyword id="KW-0472">Membrane</keyword>
<keyword id="KW-0479">Metal-binding</keyword>
<keyword id="KW-0482">Metalloprotease</keyword>
<keyword id="KW-0547">Nucleotide-binding</keyword>
<keyword id="KW-0645">Protease</keyword>
<keyword id="KW-1185">Reference proteome</keyword>
<keyword id="KW-0812">Transmembrane</keyword>
<keyword id="KW-1133">Transmembrane helix</keyword>
<keyword id="KW-0862">Zinc</keyword>
<protein>
    <recommendedName>
        <fullName evidence="1">ATP-dependent zinc metalloprotease FtsH</fullName>
        <ecNumber evidence="1">3.4.24.-</ecNumber>
    </recommendedName>
</protein>